<evidence type="ECO:0000255" key="1">
    <source>
        <dbReference type="HAMAP-Rule" id="MF_00762"/>
    </source>
</evidence>
<accession>A7FGP6</accession>
<dbReference type="EMBL" id="CP000720">
    <property type="protein sequence ID" value="ABS45869.1"/>
    <property type="molecule type" value="Genomic_DNA"/>
</dbReference>
<dbReference type="RefSeq" id="WP_002210286.1">
    <property type="nucleotide sequence ID" value="NC_009708.1"/>
</dbReference>
<dbReference type="SMR" id="A7FGP6"/>
<dbReference type="KEGG" id="ypi:YpsIP31758_1445"/>
<dbReference type="HOGENOM" id="CLU_101021_1_0_6"/>
<dbReference type="Proteomes" id="UP000002412">
    <property type="component" value="Chromosome"/>
</dbReference>
<dbReference type="Gene3D" id="1.10.287.680">
    <property type="entry name" value="Helix hairpin bin"/>
    <property type="match status" value="1"/>
</dbReference>
<dbReference type="Gene3D" id="1.10.3190.10">
    <property type="entry name" value="yfbu gene product, domain 2"/>
    <property type="match status" value="1"/>
</dbReference>
<dbReference type="HAMAP" id="MF_00762">
    <property type="entry name" value="UPF0304"/>
    <property type="match status" value="1"/>
</dbReference>
<dbReference type="InterPro" id="IPR005587">
    <property type="entry name" value="UPF0304_YfbU"/>
</dbReference>
<dbReference type="InterPro" id="IPR023146">
    <property type="entry name" value="YfbU_alpha-helical_sf"/>
</dbReference>
<dbReference type="InterPro" id="IPR023145">
    <property type="entry name" value="YfbU_helix-hairpin_sf"/>
</dbReference>
<dbReference type="NCBIfam" id="NF003936">
    <property type="entry name" value="PRK05445.1"/>
    <property type="match status" value="1"/>
</dbReference>
<dbReference type="Pfam" id="PF03887">
    <property type="entry name" value="YfbU"/>
    <property type="match status" value="1"/>
</dbReference>
<dbReference type="PIRSF" id="PIRSF006272">
    <property type="entry name" value="UCP006272"/>
    <property type="match status" value="1"/>
</dbReference>
<dbReference type="SUPFAM" id="SSF116960">
    <property type="entry name" value="YfbU-like"/>
    <property type="match status" value="1"/>
</dbReference>
<comment type="similarity">
    <text evidence="1">Belongs to the UPF0304 family.</text>
</comment>
<proteinExistence type="inferred from homology"/>
<sequence>MDMTNAQRLILSNQYKMMTMLDPENAERYRRQQTIVERGFGLQMRELDRDFGEMSEDTCRTIINIMEMHHALQVSWGNLKEKQDLDERRISFLGFDAATESRYLSYVRFMVNTEGRYTHFDSGTHGFNSQTPMWDKYQRMLAIWQSCPRQYHLSAVEISQIINA</sequence>
<reference key="1">
    <citation type="journal article" date="2007" name="PLoS Genet.">
        <title>The complete genome sequence of Yersinia pseudotuberculosis IP31758, the causative agent of Far East scarlet-like fever.</title>
        <authorList>
            <person name="Eppinger M."/>
            <person name="Rosovitz M.J."/>
            <person name="Fricke W.F."/>
            <person name="Rasko D.A."/>
            <person name="Kokorina G."/>
            <person name="Fayolle C."/>
            <person name="Lindler L.E."/>
            <person name="Carniel E."/>
            <person name="Ravel J."/>
        </authorList>
    </citation>
    <scope>NUCLEOTIDE SEQUENCE [LARGE SCALE GENOMIC DNA]</scope>
    <source>
        <strain>IP 31758</strain>
    </source>
</reference>
<organism>
    <name type="scientific">Yersinia pseudotuberculosis serotype O:1b (strain IP 31758)</name>
    <dbReference type="NCBI Taxonomy" id="349747"/>
    <lineage>
        <taxon>Bacteria</taxon>
        <taxon>Pseudomonadati</taxon>
        <taxon>Pseudomonadota</taxon>
        <taxon>Gammaproteobacteria</taxon>
        <taxon>Enterobacterales</taxon>
        <taxon>Yersiniaceae</taxon>
        <taxon>Yersinia</taxon>
    </lineage>
</organism>
<name>Y1445_YERP3</name>
<protein>
    <recommendedName>
        <fullName evidence="1">UPF0304 protein YpsIP31758_1445</fullName>
    </recommendedName>
</protein>
<feature type="chain" id="PRO_1000062211" description="UPF0304 protein YpsIP31758_1445">
    <location>
        <begin position="1"/>
        <end position="164"/>
    </location>
</feature>
<gene>
    <name type="ordered locus">YpsIP31758_1445</name>
</gene>